<gene>
    <name evidence="1" type="primary">rpsU</name>
    <name type="ordered locus">Athe_1268</name>
</gene>
<accession>B9MRR4</accession>
<evidence type="ECO:0000255" key="1">
    <source>
        <dbReference type="HAMAP-Rule" id="MF_00358"/>
    </source>
</evidence>
<evidence type="ECO:0000256" key="2">
    <source>
        <dbReference type="SAM" id="MobiDB-lite"/>
    </source>
</evidence>
<evidence type="ECO:0000305" key="3"/>
<protein>
    <recommendedName>
        <fullName evidence="1">Small ribosomal subunit protein bS21</fullName>
    </recommendedName>
    <alternativeName>
        <fullName evidence="3">30S ribosomal protein S21</fullName>
    </alternativeName>
</protein>
<sequence length="58" mass="6871">MSEVRVGENESLDSALRRFKKKCAEAGVLAELRKREHYESPSVRRKKKSEAARRRKRR</sequence>
<proteinExistence type="inferred from homology"/>
<reference key="1">
    <citation type="submission" date="2009-01" db="EMBL/GenBank/DDBJ databases">
        <title>Complete sequence of chromosome of Caldicellulosiruptor becscii DSM 6725.</title>
        <authorList>
            <person name="Lucas S."/>
            <person name="Copeland A."/>
            <person name="Lapidus A."/>
            <person name="Glavina del Rio T."/>
            <person name="Tice H."/>
            <person name="Bruce D."/>
            <person name="Goodwin L."/>
            <person name="Pitluck S."/>
            <person name="Sims D."/>
            <person name="Meincke L."/>
            <person name="Brettin T."/>
            <person name="Detter J.C."/>
            <person name="Han C."/>
            <person name="Larimer F."/>
            <person name="Land M."/>
            <person name="Hauser L."/>
            <person name="Kyrpides N."/>
            <person name="Ovchinnikova G."/>
            <person name="Kataeva I."/>
            <person name="Adams M.W.W."/>
        </authorList>
    </citation>
    <scope>NUCLEOTIDE SEQUENCE [LARGE SCALE GENOMIC DNA]</scope>
    <source>
        <strain>ATCC BAA-1888 / DSM 6725 / KCTC 15123 / Z-1320</strain>
    </source>
</reference>
<feature type="chain" id="PRO_1000133458" description="Small ribosomal subunit protein bS21">
    <location>
        <begin position="1"/>
        <end position="58"/>
    </location>
</feature>
<feature type="region of interest" description="Disordered" evidence="2">
    <location>
        <begin position="34"/>
        <end position="58"/>
    </location>
</feature>
<feature type="compositionally biased region" description="Basic residues" evidence="2">
    <location>
        <begin position="43"/>
        <end position="58"/>
    </location>
</feature>
<name>RS21_CALBD</name>
<organism>
    <name type="scientific">Caldicellulosiruptor bescii (strain ATCC BAA-1888 / DSM 6725 / KCTC 15123 / Z-1320)</name>
    <name type="common">Anaerocellum thermophilum</name>
    <dbReference type="NCBI Taxonomy" id="521460"/>
    <lineage>
        <taxon>Bacteria</taxon>
        <taxon>Bacillati</taxon>
        <taxon>Bacillota</taxon>
        <taxon>Bacillota incertae sedis</taxon>
        <taxon>Caldicellulosiruptorales</taxon>
        <taxon>Caldicellulosiruptoraceae</taxon>
        <taxon>Caldicellulosiruptor</taxon>
    </lineage>
</organism>
<dbReference type="EMBL" id="CP001393">
    <property type="protein sequence ID" value="ACM60368.1"/>
    <property type="molecule type" value="Genomic_DNA"/>
</dbReference>
<dbReference type="RefSeq" id="WP_011917352.1">
    <property type="nucleotide sequence ID" value="NC_012034.1"/>
</dbReference>
<dbReference type="SMR" id="B9MRR4"/>
<dbReference type="STRING" id="521460.Athe_1268"/>
<dbReference type="GeneID" id="31772616"/>
<dbReference type="KEGG" id="ate:Athe_1268"/>
<dbReference type="eggNOG" id="COG0828">
    <property type="taxonomic scope" value="Bacteria"/>
</dbReference>
<dbReference type="HOGENOM" id="CLU_159258_3_2_9"/>
<dbReference type="Proteomes" id="UP000007723">
    <property type="component" value="Chromosome"/>
</dbReference>
<dbReference type="GO" id="GO:1990904">
    <property type="term" value="C:ribonucleoprotein complex"/>
    <property type="evidence" value="ECO:0007669"/>
    <property type="project" value="UniProtKB-KW"/>
</dbReference>
<dbReference type="GO" id="GO:0005840">
    <property type="term" value="C:ribosome"/>
    <property type="evidence" value="ECO:0007669"/>
    <property type="project" value="UniProtKB-KW"/>
</dbReference>
<dbReference type="GO" id="GO:0003735">
    <property type="term" value="F:structural constituent of ribosome"/>
    <property type="evidence" value="ECO:0007669"/>
    <property type="project" value="InterPro"/>
</dbReference>
<dbReference type="GO" id="GO:0006412">
    <property type="term" value="P:translation"/>
    <property type="evidence" value="ECO:0007669"/>
    <property type="project" value="UniProtKB-UniRule"/>
</dbReference>
<dbReference type="Gene3D" id="1.20.5.1150">
    <property type="entry name" value="Ribosomal protein S8"/>
    <property type="match status" value="1"/>
</dbReference>
<dbReference type="HAMAP" id="MF_00358">
    <property type="entry name" value="Ribosomal_bS21"/>
    <property type="match status" value="1"/>
</dbReference>
<dbReference type="InterPro" id="IPR001911">
    <property type="entry name" value="Ribosomal_bS21"/>
</dbReference>
<dbReference type="InterPro" id="IPR038380">
    <property type="entry name" value="Ribosomal_bS21_sf"/>
</dbReference>
<dbReference type="NCBIfam" id="TIGR00030">
    <property type="entry name" value="S21p"/>
    <property type="match status" value="1"/>
</dbReference>
<dbReference type="PANTHER" id="PTHR21109">
    <property type="entry name" value="MITOCHONDRIAL 28S RIBOSOMAL PROTEIN S21"/>
    <property type="match status" value="1"/>
</dbReference>
<dbReference type="PANTHER" id="PTHR21109:SF22">
    <property type="entry name" value="SMALL RIBOSOMAL SUBUNIT PROTEIN BS21"/>
    <property type="match status" value="1"/>
</dbReference>
<dbReference type="Pfam" id="PF01165">
    <property type="entry name" value="Ribosomal_S21"/>
    <property type="match status" value="1"/>
</dbReference>
<dbReference type="PRINTS" id="PR00976">
    <property type="entry name" value="RIBOSOMALS21"/>
</dbReference>
<keyword id="KW-0687">Ribonucleoprotein</keyword>
<keyword id="KW-0689">Ribosomal protein</keyword>
<comment type="similarity">
    <text evidence="1">Belongs to the bacterial ribosomal protein bS21 family.</text>
</comment>